<gene>
    <name type="primary">occR</name>
</gene>
<sequence>MNLRQVEAFRAVMLTGQMTAAAELMLVTQPAISRLIKDFERATKLQLFERRGNHIIPTQEAKTLWEEVDRAFVGLNHIGNLAADIGRQAAGTLRIAAMPALANGFLPRFLAQFLHKPKLQVSLMGLPSSMVMEAVASGRADIGYADGPSERQGFLIETRSLPAMVAVPMGHRLAGLDRITPQEPGGERIIKQETGTLFAMRVEVAIGSILRRPSLEVSLSHTALSLVREAAGIAIIDPTAAIEFKDSIALRPFSIFIDAGFLEVRSANGAPSTVVDRFATEFSSFHDALMAQSGLIS</sequence>
<feature type="chain" id="PRO_0000105698" description="Octopine catabolism/uptake operon regulatory protein OccR">
    <location>
        <begin position="1"/>
        <end position="297"/>
    </location>
</feature>
<feature type="domain" description="HTH lysR-type" evidence="1">
    <location>
        <begin position="1"/>
        <end position="58"/>
    </location>
</feature>
<feature type="DNA-binding region" description="H-T-H motif" evidence="1">
    <location>
        <begin position="18"/>
        <end position="37"/>
    </location>
</feature>
<reference key="1">
    <citation type="submission" date="1996-08" db="EMBL/GenBank/DDBJ databases">
        <title>The octopine catabolism operon of Rhizobium meliloti A3.</title>
        <authorList>
            <person name="Au S."/>
            <person name="Bergeron J."/>
            <person name="Dion P."/>
        </authorList>
    </citation>
    <scope>NUCLEOTIDE SEQUENCE [GENOMIC DNA]</scope>
    <source>
        <strain>A3</strain>
    </source>
</reference>
<protein>
    <recommendedName>
        <fullName>Octopine catabolism/uptake operon regulatory protein OccR</fullName>
    </recommendedName>
</protein>
<keyword id="KW-0010">Activator</keyword>
<keyword id="KW-0238">DNA-binding</keyword>
<keyword id="KW-0804">Transcription</keyword>
<keyword id="KW-0805">Transcription regulation</keyword>
<evidence type="ECO:0000255" key="1">
    <source>
        <dbReference type="PROSITE-ProRule" id="PRU00253"/>
    </source>
</evidence>
<evidence type="ECO:0000305" key="2"/>
<proteinExistence type="inferred from homology"/>
<dbReference type="EMBL" id="U66830">
    <property type="protein sequence ID" value="AAB07517.1"/>
    <property type="molecule type" value="Genomic_DNA"/>
</dbReference>
<dbReference type="SMR" id="P72294"/>
<dbReference type="GO" id="GO:0003700">
    <property type="term" value="F:DNA-binding transcription factor activity"/>
    <property type="evidence" value="ECO:0007669"/>
    <property type="project" value="InterPro"/>
</dbReference>
<dbReference type="GO" id="GO:0043565">
    <property type="term" value="F:sequence-specific DNA binding"/>
    <property type="evidence" value="ECO:0007669"/>
    <property type="project" value="TreeGrafter"/>
</dbReference>
<dbReference type="GO" id="GO:0010628">
    <property type="term" value="P:positive regulation of gene expression"/>
    <property type="evidence" value="ECO:0007669"/>
    <property type="project" value="TreeGrafter"/>
</dbReference>
<dbReference type="CDD" id="cd08457">
    <property type="entry name" value="PBP2_OccR"/>
    <property type="match status" value="1"/>
</dbReference>
<dbReference type="Gene3D" id="3.40.190.10">
    <property type="entry name" value="Periplasmic binding protein-like II"/>
    <property type="match status" value="2"/>
</dbReference>
<dbReference type="Gene3D" id="1.10.10.10">
    <property type="entry name" value="Winged helix-like DNA-binding domain superfamily/Winged helix DNA-binding domain"/>
    <property type="match status" value="1"/>
</dbReference>
<dbReference type="InterPro" id="IPR005119">
    <property type="entry name" value="LysR_subst-bd"/>
</dbReference>
<dbReference type="InterPro" id="IPR037415">
    <property type="entry name" value="OccR_PBP2"/>
</dbReference>
<dbReference type="InterPro" id="IPR000847">
    <property type="entry name" value="Tscrpt_reg_HTH_LysR"/>
</dbReference>
<dbReference type="InterPro" id="IPR036388">
    <property type="entry name" value="WH-like_DNA-bd_sf"/>
</dbReference>
<dbReference type="InterPro" id="IPR036390">
    <property type="entry name" value="WH_DNA-bd_sf"/>
</dbReference>
<dbReference type="PANTHER" id="PTHR30427">
    <property type="entry name" value="TRANSCRIPTIONAL ACTIVATOR PROTEIN LYSR"/>
    <property type="match status" value="1"/>
</dbReference>
<dbReference type="PANTHER" id="PTHR30427:SF1">
    <property type="entry name" value="TRANSCRIPTIONAL ACTIVATOR PROTEIN LYSR"/>
    <property type="match status" value="1"/>
</dbReference>
<dbReference type="Pfam" id="PF00126">
    <property type="entry name" value="HTH_1"/>
    <property type="match status" value="1"/>
</dbReference>
<dbReference type="Pfam" id="PF03466">
    <property type="entry name" value="LysR_substrate"/>
    <property type="match status" value="1"/>
</dbReference>
<dbReference type="SUPFAM" id="SSF53850">
    <property type="entry name" value="Periplasmic binding protein-like II"/>
    <property type="match status" value="1"/>
</dbReference>
<dbReference type="SUPFAM" id="SSF46785">
    <property type="entry name" value="Winged helix' DNA-binding domain"/>
    <property type="match status" value="1"/>
</dbReference>
<dbReference type="PROSITE" id="PS50931">
    <property type="entry name" value="HTH_LYSR"/>
    <property type="match status" value="1"/>
</dbReference>
<comment type="function">
    <text>Positive regulatory protein for the occ operon involved in octopine catabolism and uptake. Also acts as a negative regulator of its expression.</text>
</comment>
<comment type="similarity">
    <text evidence="2">Belongs to the LysR transcriptional regulatory family.</text>
</comment>
<accession>P72294</accession>
<organism>
    <name type="scientific">Rhizobium meliloti</name>
    <name type="common">Ensifer meliloti</name>
    <name type="synonym">Sinorhizobium meliloti</name>
    <dbReference type="NCBI Taxonomy" id="382"/>
    <lineage>
        <taxon>Bacteria</taxon>
        <taxon>Pseudomonadati</taxon>
        <taxon>Pseudomonadota</taxon>
        <taxon>Alphaproteobacteria</taxon>
        <taxon>Hyphomicrobiales</taxon>
        <taxon>Rhizobiaceae</taxon>
        <taxon>Sinorhizobium/Ensifer group</taxon>
        <taxon>Sinorhizobium</taxon>
    </lineage>
</organism>
<name>OCCR_RHIML</name>